<keyword id="KW-0120">Carbon dioxide fixation</keyword>
<keyword id="KW-0903">Direct protein sequencing</keyword>
<keyword id="KW-0456">Lyase</keyword>
<keyword id="KW-0460">Magnesium</keyword>
<keyword id="KW-1185">Reference proteome</keyword>
<protein>
    <recommendedName>
        <fullName>Phosphoenolpyruvate carboxylase</fullName>
        <shortName>PEPC</shortName>
        <shortName>PEPCase</shortName>
        <ecNumber>4.1.1.31</ecNumber>
    </recommendedName>
</protein>
<dbReference type="EC" id="4.1.1.31"/>
<dbReference type="EMBL" id="AE000666">
    <property type="protein sequence ID" value="AAB85441.1"/>
    <property type="status" value="ALT_INIT"/>
    <property type="molecule type" value="Genomic_DNA"/>
</dbReference>
<dbReference type="PIR" id="D69226">
    <property type="entry name" value="D69226"/>
</dbReference>
<dbReference type="RefSeq" id="WP_048060929.1">
    <property type="nucleotide sequence ID" value="NC_000916.1"/>
</dbReference>
<dbReference type="SMR" id="O27026"/>
<dbReference type="STRING" id="187420.MTH_943"/>
<dbReference type="PaxDb" id="187420-MTH_943"/>
<dbReference type="EnsemblBacteria" id="AAB85441">
    <property type="protein sequence ID" value="AAB85441"/>
    <property type="gene ID" value="MTH_943"/>
</dbReference>
<dbReference type="GeneID" id="82297391"/>
<dbReference type="KEGG" id="mth:MTH_943"/>
<dbReference type="PATRIC" id="fig|187420.15.peg.927"/>
<dbReference type="HOGENOM" id="CLU_517433_0_0_2"/>
<dbReference type="InParanoid" id="O27026"/>
<dbReference type="BioCyc" id="MetaCyc:MONOMER-14528"/>
<dbReference type="SABIO-RK" id="O27026"/>
<dbReference type="Proteomes" id="UP000005223">
    <property type="component" value="Chromosome"/>
</dbReference>
<dbReference type="GO" id="GO:0000287">
    <property type="term" value="F:magnesium ion binding"/>
    <property type="evidence" value="ECO:0000314"/>
    <property type="project" value="UniProtKB"/>
</dbReference>
<dbReference type="GO" id="GO:0008964">
    <property type="term" value="F:phosphoenolpyruvate carboxylase activity"/>
    <property type="evidence" value="ECO:0000314"/>
    <property type="project" value="UniProtKB"/>
</dbReference>
<dbReference type="GO" id="GO:0015977">
    <property type="term" value="P:carbon fixation"/>
    <property type="evidence" value="ECO:0000314"/>
    <property type="project" value="UniProtKB"/>
</dbReference>
<dbReference type="GO" id="GO:0006107">
    <property type="term" value="P:oxaloacetate metabolic process"/>
    <property type="evidence" value="ECO:0000314"/>
    <property type="project" value="UniProtKB"/>
</dbReference>
<dbReference type="GO" id="GO:0006099">
    <property type="term" value="P:tricarboxylic acid cycle"/>
    <property type="evidence" value="ECO:0007669"/>
    <property type="project" value="InterPro"/>
</dbReference>
<dbReference type="HAMAP" id="MF_01904">
    <property type="entry name" value="PEPcase_type2"/>
    <property type="match status" value="1"/>
</dbReference>
<dbReference type="InterPro" id="IPR007566">
    <property type="entry name" value="PEP_COase_arc-type"/>
</dbReference>
<dbReference type="InterPro" id="IPR015813">
    <property type="entry name" value="Pyrv/PenolPyrv_kinase-like_dom"/>
</dbReference>
<dbReference type="NCBIfam" id="TIGR02751">
    <property type="entry name" value="PEPCase_arch"/>
    <property type="match status" value="1"/>
</dbReference>
<dbReference type="Pfam" id="PF14010">
    <property type="entry name" value="PEPcase_2"/>
    <property type="match status" value="1"/>
</dbReference>
<dbReference type="PIRSF" id="PIRSF006677">
    <property type="entry name" value="UCP006677"/>
    <property type="match status" value="1"/>
</dbReference>
<dbReference type="SUPFAM" id="SSF51621">
    <property type="entry name" value="Phosphoenolpyruvate/pyruvate domain"/>
    <property type="match status" value="1"/>
</dbReference>
<name>CAPPA_METTH</name>
<comment type="function">
    <text evidence="2">Catalyzes the irreversible beta-carboxylation of phosphoenolpyruvate (PEP) to form oxaloacetate (OAA), a four-carbon dicarboxylic acid source for the tricarboxylic acid cycle.</text>
</comment>
<comment type="catalytic activity">
    <reaction evidence="2">
        <text>oxaloacetate + phosphate = phosphoenolpyruvate + hydrogencarbonate</text>
        <dbReference type="Rhea" id="RHEA:28370"/>
        <dbReference type="ChEBI" id="CHEBI:16452"/>
        <dbReference type="ChEBI" id="CHEBI:17544"/>
        <dbReference type="ChEBI" id="CHEBI:43474"/>
        <dbReference type="ChEBI" id="CHEBI:58702"/>
        <dbReference type="EC" id="4.1.1.31"/>
    </reaction>
</comment>
<comment type="cofactor">
    <cofactor evidence="2">
        <name>Mg(2+)</name>
        <dbReference type="ChEBI" id="CHEBI:18420"/>
    </cofactor>
</comment>
<comment type="activity regulation">
    <text evidence="2">Inhibited by NaCl, KCl, ATP, ADP, GTP and aspartate. Unlike E.coli, not regulated by acetyl-CoA.</text>
</comment>
<comment type="biophysicochemical properties">
    <kinetics>
        <KM evidence="2">1.8 mM for KHCO(3)</KM>
        <KM evidence="2">0.46 mM for phosphoenolpyruvate</KM>
    </kinetics>
    <phDependence>
        <text evidence="2">Optimum pH is 6.8.</text>
    </phDependence>
    <temperatureDependence>
        <text evidence="2">Optimum temperature is 62 degrees Celsius.</text>
    </temperatureDependence>
</comment>
<comment type="subunit">
    <text evidence="2">Homotetramer.</text>
</comment>
<comment type="similarity">
    <text evidence="3">Belongs to the PEPCase type 2 family.</text>
</comment>
<comment type="sequence caution" evidence="3">
    <conflict type="erroneous initiation">
        <sequence resource="EMBL-CDS" id="AAB85441"/>
    </conflict>
    <text>Extended N-terminus.</text>
</comment>
<sequence>MKVPRCMSTQHPDNVNPPFFAEEPELGGEDEIREAYYVFSHLGCDEQMWDCEGKEVDNYVVKKLLTKYQAFFRDHVLGEDLRLTLRVPNPTVERAEAKILLETLESIPRSYDTASLFYGMDAAPVFEVILPMTSSSSCLNRIHSYYLDFVKGKERLQLADGVTVKEWIGEFRPDEINVIPLFEDHEGMLNAAKITGEYLDGKDIQEQRVFLARSDPAMNYGMISATLLNRIALSDFRDLEEESGVKLYPIIGMGSAPFRGNLRPDNVEDVTWEYRGAYTFTVQSSFKYDHEPSDVIRGIKKLRSVKPGRAAEIERESVLEIISAYCREYRRQVMDLVDIINRVARYVPGRRKRKLHIGLFGYSRSMGNVSLPRAITFTAALYSLGVPPELLGFNALSSGDLEFIEEVYPGLGRDLHDAARYANPESPFLSPEVKSSFEEYLEPEYDEGHMKTTEEIIRALRINRTANLQELILEAASQRKFLG</sequence>
<feature type="chain" id="PRO_0000309600" description="Phosphoenolpyruvate carboxylase">
    <location>
        <begin position="1"/>
        <end position="483"/>
    </location>
</feature>
<feature type="region of interest" description="Disordered" evidence="1">
    <location>
        <begin position="1"/>
        <end position="20"/>
    </location>
</feature>
<accession>O27026</accession>
<reference key="1">
    <citation type="journal article" date="1997" name="J. Bacteriol.">
        <title>Complete genome sequence of Methanobacterium thermoautotrophicum deltaH: functional analysis and comparative genomics.</title>
        <authorList>
            <person name="Smith D.R."/>
            <person name="Doucette-Stamm L.A."/>
            <person name="Deloughery C."/>
            <person name="Lee H.-M."/>
            <person name="Dubois J."/>
            <person name="Aldredge T."/>
            <person name="Bashirzadeh R."/>
            <person name="Blakely D."/>
            <person name="Cook R."/>
            <person name="Gilbert K."/>
            <person name="Harrison D."/>
            <person name="Hoang L."/>
            <person name="Keagle P."/>
            <person name="Lumm W."/>
            <person name="Pothier B."/>
            <person name="Qiu D."/>
            <person name="Spadafora R."/>
            <person name="Vicare R."/>
            <person name="Wang Y."/>
            <person name="Wierzbowski J."/>
            <person name="Gibson R."/>
            <person name="Jiwani N."/>
            <person name="Caruso A."/>
            <person name="Bush D."/>
            <person name="Safer H."/>
            <person name="Patwell D."/>
            <person name="Prabhakar S."/>
            <person name="McDougall S."/>
            <person name="Shimer G."/>
            <person name="Goyal A."/>
            <person name="Pietrovski S."/>
            <person name="Church G.M."/>
            <person name="Daniels C.J."/>
            <person name="Mao J.-I."/>
            <person name="Rice P."/>
            <person name="Noelling J."/>
            <person name="Reeve J.N."/>
        </authorList>
    </citation>
    <scope>NUCLEOTIDE SEQUENCE [LARGE SCALE GENOMIC DNA]</scope>
    <source>
        <strain>ATCC 29096 / DSM 1053 / JCM 10044 / NBRC 100330 / Delta H</strain>
    </source>
</reference>
<reference key="2">
    <citation type="journal article" date="2004" name="J. Bacteriol.">
        <title>The phosphoenolpyruvate carboxylase from Methanothermobacter thermautotrophicus has a novel structure.</title>
        <authorList>
            <person name="Patel H.M."/>
            <person name="Kraszewski J.L."/>
            <person name="Mukhopadhyay B."/>
        </authorList>
    </citation>
    <scope>PROTEIN SEQUENCE OF 1-10</scope>
    <scope>FUNCTION</scope>
    <scope>CATALYTIC ACTIVITY</scope>
    <scope>COFACTOR</scope>
    <scope>ACTIVITY REGULATION</scope>
    <scope>BIOPHYSICOCHEMICAL PROPERTIES</scope>
    <scope>SUBUNIT</scope>
    <source>
        <strain>ATCC 29096 / DSM 1053 / JCM 10044 / NBRC 100330 / Delta H</strain>
    </source>
</reference>
<evidence type="ECO:0000256" key="1">
    <source>
        <dbReference type="SAM" id="MobiDB-lite"/>
    </source>
</evidence>
<evidence type="ECO:0000269" key="2">
    <source>
    </source>
</evidence>
<evidence type="ECO:0000305" key="3"/>
<proteinExistence type="evidence at protein level"/>
<organism>
    <name type="scientific">Methanothermobacter thermautotrophicus (strain ATCC 29096 / DSM 1053 / JCM 10044 / NBRC 100330 / Delta H)</name>
    <name type="common">Methanobacterium thermoautotrophicum</name>
    <dbReference type="NCBI Taxonomy" id="187420"/>
    <lineage>
        <taxon>Archaea</taxon>
        <taxon>Methanobacteriati</taxon>
        <taxon>Methanobacteriota</taxon>
        <taxon>Methanomada group</taxon>
        <taxon>Methanobacteria</taxon>
        <taxon>Methanobacteriales</taxon>
        <taxon>Methanobacteriaceae</taxon>
        <taxon>Methanothermobacter</taxon>
    </lineage>
</organism>
<gene>
    <name type="primary">ppcA</name>
    <name type="ordered locus">MTH_943</name>
</gene>